<dbReference type="EMBL" id="AK160791">
    <property type="protein sequence ID" value="BAE36014.1"/>
    <property type="molecule type" value="mRNA"/>
</dbReference>
<dbReference type="EMBL" id="AK122463">
    <property type="protein sequence ID" value="BAC65745.3"/>
    <property type="status" value="ALT_SEQ"/>
    <property type="molecule type" value="Transcribed_RNA"/>
</dbReference>
<dbReference type="EMBL" id="BC042768">
    <property type="protein sequence ID" value="AAH42768.1"/>
    <property type="molecule type" value="mRNA"/>
</dbReference>
<dbReference type="EMBL" id="BC057045">
    <property type="protein sequence ID" value="AAH57045.1"/>
    <property type="status" value="ALT_INIT"/>
    <property type="molecule type" value="mRNA"/>
</dbReference>
<dbReference type="CCDS" id="CCDS28043.1">
    <molecule id="Q3TUF7-3"/>
</dbReference>
<dbReference type="CCDS" id="CCDS49790.1">
    <molecule id="Q3TUF7-1"/>
</dbReference>
<dbReference type="RefSeq" id="NP_001028409.2">
    <molecule id="Q3TUF7-3"/>
    <property type="nucleotide sequence ID" value="NM_001033237.2"/>
</dbReference>
<dbReference type="RefSeq" id="NP_001139402.1">
    <molecule id="Q3TUF7-1"/>
    <property type="nucleotide sequence ID" value="NM_001145930.1"/>
</dbReference>
<dbReference type="RefSeq" id="XP_006521965.1">
    <molecule id="Q3TUF7-1"/>
    <property type="nucleotide sequence ID" value="XM_006521902.5"/>
</dbReference>
<dbReference type="SMR" id="Q3TUF7"/>
<dbReference type="BioGRID" id="228952">
    <property type="interactions" value="6"/>
</dbReference>
<dbReference type="ComplexPortal" id="CPX-1025">
    <property type="entry name" value="GCN5-containing ATAC complex"/>
</dbReference>
<dbReference type="ComplexPortal" id="CPX-1029">
    <property type="entry name" value="PCAF-containing ATAC complex"/>
</dbReference>
<dbReference type="FunCoup" id="Q3TUF7">
    <property type="interactions" value="2647"/>
</dbReference>
<dbReference type="IntAct" id="Q3TUF7">
    <property type="interactions" value="4"/>
</dbReference>
<dbReference type="MINT" id="Q3TUF7"/>
<dbReference type="STRING" id="10090.ENSMUSP00000111222"/>
<dbReference type="GlyGen" id="Q3TUF7">
    <property type="glycosylation" value="16 sites, 1 N-linked glycan (1 site), 1 O-linked glycan (13 sites)"/>
</dbReference>
<dbReference type="iPTMnet" id="Q3TUF7"/>
<dbReference type="PhosphoSitePlus" id="Q3TUF7"/>
<dbReference type="jPOST" id="Q3TUF7"/>
<dbReference type="PaxDb" id="10090-ENSMUSP00000111222"/>
<dbReference type="PeptideAtlas" id="Q3TUF7"/>
<dbReference type="ProteomicsDB" id="299624">
    <molecule id="Q3TUF7-1"/>
</dbReference>
<dbReference type="ProteomicsDB" id="299625">
    <molecule id="Q3TUF7-2"/>
</dbReference>
<dbReference type="ProteomicsDB" id="299626">
    <molecule id="Q3TUF7-3"/>
</dbReference>
<dbReference type="Pumba" id="Q3TUF7"/>
<dbReference type="Antibodypedia" id="50874">
    <property type="antibodies" value="92 antibodies from 26 providers"/>
</dbReference>
<dbReference type="Ensembl" id="ENSMUST00000090052.11">
    <molecule id="Q3TUF7-3"/>
    <property type="protein sequence ID" value="ENSMUSP00000087506.5"/>
    <property type="gene ID" value="ENSMUSG00000041215.17"/>
</dbReference>
<dbReference type="Ensembl" id="ENSMUST00000115560.4">
    <molecule id="Q3TUF7-1"/>
    <property type="protein sequence ID" value="ENSMUSP00000111222.3"/>
    <property type="gene ID" value="ENSMUSG00000041215.17"/>
</dbReference>
<dbReference type="GeneID" id="208146"/>
<dbReference type="KEGG" id="mmu:208146"/>
<dbReference type="UCSC" id="uc007ypj.2">
    <molecule id="Q3TUF7-1"/>
    <property type="organism name" value="mouse"/>
</dbReference>
<dbReference type="AGR" id="MGI:2447762"/>
<dbReference type="CTD" id="55689"/>
<dbReference type="MGI" id="MGI:2447762">
    <property type="gene designation" value="Yeats2"/>
</dbReference>
<dbReference type="VEuPathDB" id="HostDB:ENSMUSG00000041215"/>
<dbReference type="eggNOG" id="KOG3149">
    <property type="taxonomic scope" value="Eukaryota"/>
</dbReference>
<dbReference type="GeneTree" id="ENSGT00940000156789"/>
<dbReference type="HOGENOM" id="CLU_258270_0_0_1"/>
<dbReference type="InParanoid" id="Q3TUF7"/>
<dbReference type="OrthoDB" id="1741717at2759"/>
<dbReference type="PhylomeDB" id="Q3TUF7"/>
<dbReference type="TreeFam" id="TF314586"/>
<dbReference type="Reactome" id="R-MMU-9772755">
    <property type="pathway name" value="Formation of WDR5-containing histone-modifying complexes"/>
</dbReference>
<dbReference type="BioGRID-ORCS" id="208146">
    <property type="hits" value="19 hits in 83 CRISPR screens"/>
</dbReference>
<dbReference type="ChiTaRS" id="Yeats2">
    <property type="organism name" value="mouse"/>
</dbReference>
<dbReference type="PRO" id="PR:Q3TUF7"/>
<dbReference type="Proteomes" id="UP000000589">
    <property type="component" value="Chromosome 16"/>
</dbReference>
<dbReference type="RNAct" id="Q3TUF7">
    <property type="molecule type" value="protein"/>
</dbReference>
<dbReference type="Bgee" id="ENSMUSG00000041215">
    <property type="expression patterns" value="Expressed in dorsal pancreas and 231 other cell types or tissues"/>
</dbReference>
<dbReference type="ExpressionAtlas" id="Q3TUF7">
    <property type="expression patterns" value="baseline and differential"/>
</dbReference>
<dbReference type="GO" id="GO:0140672">
    <property type="term" value="C:ATAC complex"/>
    <property type="evidence" value="ECO:0000314"/>
    <property type="project" value="MGI"/>
</dbReference>
<dbReference type="GO" id="GO:0072686">
    <property type="term" value="C:mitotic spindle"/>
    <property type="evidence" value="ECO:0000314"/>
    <property type="project" value="MGI"/>
</dbReference>
<dbReference type="GO" id="GO:0005634">
    <property type="term" value="C:nucleus"/>
    <property type="evidence" value="ECO:0000314"/>
    <property type="project" value="MGI"/>
</dbReference>
<dbReference type="GO" id="GO:0042393">
    <property type="term" value="F:histone binding"/>
    <property type="evidence" value="ECO:0000250"/>
    <property type="project" value="UniProtKB"/>
</dbReference>
<dbReference type="GO" id="GO:0140566">
    <property type="term" value="F:histone reader activity"/>
    <property type="evidence" value="ECO:0007669"/>
    <property type="project" value="Ensembl"/>
</dbReference>
<dbReference type="GO" id="GO:0140030">
    <property type="term" value="F:modification-dependent protein binding"/>
    <property type="evidence" value="ECO:0000250"/>
    <property type="project" value="UniProtKB"/>
</dbReference>
<dbReference type="GO" id="GO:0017025">
    <property type="term" value="F:TBP-class protein binding"/>
    <property type="evidence" value="ECO:0007669"/>
    <property type="project" value="Ensembl"/>
</dbReference>
<dbReference type="GO" id="GO:0003714">
    <property type="term" value="F:transcription corepressor activity"/>
    <property type="evidence" value="ECO:0007669"/>
    <property type="project" value="Ensembl"/>
</dbReference>
<dbReference type="GO" id="GO:0000122">
    <property type="term" value="P:negative regulation of transcription by RNA polymerase II"/>
    <property type="evidence" value="ECO:0007669"/>
    <property type="project" value="Ensembl"/>
</dbReference>
<dbReference type="GO" id="GO:0051726">
    <property type="term" value="P:regulation of cell cycle"/>
    <property type="evidence" value="ECO:0000315"/>
    <property type="project" value="ComplexPortal"/>
</dbReference>
<dbReference type="GO" id="GO:0051302">
    <property type="term" value="P:regulation of cell division"/>
    <property type="evidence" value="ECO:0000314"/>
    <property type="project" value="ComplexPortal"/>
</dbReference>
<dbReference type="GO" id="GO:0006355">
    <property type="term" value="P:regulation of DNA-templated transcription"/>
    <property type="evidence" value="ECO:0000266"/>
    <property type="project" value="ComplexPortal"/>
</dbReference>
<dbReference type="GO" id="GO:0045995">
    <property type="term" value="P:regulation of embryonic development"/>
    <property type="evidence" value="ECO:0000314"/>
    <property type="project" value="ComplexPortal"/>
</dbReference>
<dbReference type="GO" id="GO:0006357">
    <property type="term" value="P:regulation of transcription by RNA polymerase II"/>
    <property type="evidence" value="ECO:0000266"/>
    <property type="project" value="ComplexPortal"/>
</dbReference>
<dbReference type="CDD" id="cd16907">
    <property type="entry name" value="YEATS_YEATS2_like"/>
    <property type="match status" value="1"/>
</dbReference>
<dbReference type="FunFam" id="2.60.40.1970:FF:000001">
    <property type="entry name" value="YEATS domain containing 2"/>
    <property type="match status" value="1"/>
</dbReference>
<dbReference type="Gene3D" id="2.60.40.1970">
    <property type="entry name" value="YEATS domain"/>
    <property type="match status" value="1"/>
</dbReference>
<dbReference type="InterPro" id="IPR038704">
    <property type="entry name" value="YEAST_sf"/>
</dbReference>
<dbReference type="InterPro" id="IPR005033">
    <property type="entry name" value="YEATS"/>
</dbReference>
<dbReference type="InterPro" id="IPR055127">
    <property type="entry name" value="YEATS2_3HBD"/>
</dbReference>
<dbReference type="InterPro" id="IPR055129">
    <property type="entry name" value="YEATS_dom"/>
</dbReference>
<dbReference type="PANTHER" id="PTHR23195">
    <property type="entry name" value="YEATS DOMAIN"/>
    <property type="match status" value="1"/>
</dbReference>
<dbReference type="Pfam" id="PF22951">
    <property type="entry name" value="3HBD"/>
    <property type="match status" value="1"/>
</dbReference>
<dbReference type="Pfam" id="PF03366">
    <property type="entry name" value="YEATS"/>
    <property type="match status" value="1"/>
</dbReference>
<dbReference type="PROSITE" id="PS51037">
    <property type="entry name" value="YEATS"/>
    <property type="match status" value="1"/>
</dbReference>
<gene>
    <name evidence="9" type="primary">Yeats2</name>
    <name evidence="5" type="synonym">Kiaa1197</name>
</gene>
<protein>
    <recommendedName>
        <fullName evidence="8">YEATS domain-containing protein 2</fullName>
    </recommendedName>
</protein>
<proteinExistence type="evidence at protein level"/>
<sequence length="1407" mass="148950">MSGIKRTIKETDPDYEDVSVALPNKRHKAIESSARDAAVQKIETIIKEQFALEMKNKEHEIDVIDQRLIEARRMMDKLRACIVANYYASAGLLKVSEGLKTFDPMAFNHPAIKKFLESPSRSSSPTNQRSETPSANHSESDSLSQHNDFLSDKDNNSNVDVEERPPSTGEQRPSRKAGRDTSSISGSHKRELRNADLTGDETSRLFVKKTIVVGNVSKYIPPDKREENDQSTHKWMVYVRGSRREPSINHFVKKVWFFLHPSYKPNDLVEVREPPFHLTRRGWGEFPVRVQVHFKDSQNKRIDIIHNLKLDRTYTGLQTLGAETVVDVELHRHSLGEDSVYPQSSESDVCDAPPPTLTLPAAVKASAVAQSPEPAAAAPVGEGFPETTEAERHSTFYSLPSSLERTPTKVTTAQKVTFSSHGNSAFQPIASSCKIVPQSQVPNPESPGKSFQPITMSCKIVSGSPISTPSPSPLPRTPTSTPVHLKQGTASSGVSNPHVIVDKPGQVIGASTPSTGSPTSKLPVASQASQGTGSPIPKIHGSSFLTSTVKQEESLFASMPPLCPIGSHPKVQSPKAVTGGLGAFTKVIIKQEPGEAPHVSTTGAASQSAFPQYVTVKGGHMIAVSPQKQVISAGEGTTQSPKIAPSKVVGVPVGSALPSTVKQAVAISSGQILVAKASSSVTKAVGPKQVVTQGVAKAIVSGGGGTIVAQPVQTLTKTQVTAAGPQKSGSQGSVMATLQLPATNLANLANLPPGTKLYLTTNSKNPSGKGKLLLIPQGAILRATNNANLQSGSAAAGGSGSSGAGGGSGGGGGSGAGGTPSTSGPGGGPQHLTYTSYILKQTPQGTFLVGQPSPQTPGKQLTTASVVQGTLGVSSSSAQGQQTLKVISGQKTTLFTQAATAGQASLLKLPDNTLKSVPAAPQLAKPGTTMLRVAGGVITAAPSPAVAFSANGAVHQSEGSTPVSSSVGSIIKTPGQPQVCVSQATMATCKGPAAVAGTAASLVSAPSSISGKATVSGLLKVHSAQSSPQQAVLTIPSQLKPLSINTSGGVQTVLMPVNKVVQSFSTSKLPTTVLPISVPNQAAPSSAPVAIAKVKTEPETPGPNCISQENQVAVKTEESSELSNYVIKVDHLETIQQLLTAVVKKIPLITAKGDDASCFSAKSLEQYYGWNIGKRRAAEWQRAMTVRKVLQEILEKNPRFHHLTPLKTKHIAHWCRCHGYTPPDPESLRHDGDSIEDVLTQIDSEPECLSSFSTADDLCRKLEDLQQFQKREPENEEEVDILSLSEPLKTNIKKEQEEKQEEMRFYLPPTPGSGFVGDITQKIGITLQPVALHRNMYASVVEDMILKATEQLVSDILRQALAVGYQTASPNRIPKEITVSNIHQAICNIPFLDFLTNKHMGRLNEDQ</sequence>
<name>YETS2_MOUSE</name>
<feature type="chain" id="PRO_0000076367" description="YEATS domain-containing protein 2">
    <location>
        <begin position="1"/>
        <end position="1407"/>
    </location>
</feature>
<feature type="domain" description="YEATS" evidence="3">
    <location>
        <begin position="201"/>
        <end position="346"/>
    </location>
</feature>
<feature type="region of interest" description="Disordered" evidence="4">
    <location>
        <begin position="116"/>
        <end position="196"/>
    </location>
</feature>
<feature type="region of interest" description="Histone H3K27cr binding" evidence="1">
    <location>
        <begin position="260"/>
        <end position="262"/>
    </location>
</feature>
<feature type="region of interest" description="Histone H3K27cr binding" evidence="1">
    <location>
        <begin position="283"/>
        <end position="285"/>
    </location>
</feature>
<feature type="region of interest" description="Disordered" evidence="4">
    <location>
        <begin position="462"/>
        <end position="540"/>
    </location>
</feature>
<feature type="region of interest" description="Disordered" evidence="4">
    <location>
        <begin position="791"/>
        <end position="833"/>
    </location>
</feature>
<feature type="coiled-coil region" evidence="2">
    <location>
        <begin position="54"/>
        <end position="80"/>
    </location>
</feature>
<feature type="compositionally biased region" description="Polar residues" evidence="4">
    <location>
        <begin position="119"/>
        <end position="148"/>
    </location>
</feature>
<feature type="compositionally biased region" description="Basic and acidic residues" evidence="4">
    <location>
        <begin position="149"/>
        <end position="165"/>
    </location>
</feature>
<feature type="compositionally biased region" description="Low complexity" evidence="4">
    <location>
        <begin position="511"/>
        <end position="520"/>
    </location>
</feature>
<feature type="compositionally biased region" description="Gly residues" evidence="4">
    <location>
        <begin position="795"/>
        <end position="829"/>
    </location>
</feature>
<feature type="modified residue" description="Phosphoserine" evidence="1">
    <location>
        <position position="118"/>
    </location>
</feature>
<feature type="modified residue" description="Phosphoserine" evidence="10">
    <location>
        <position position="120"/>
    </location>
</feature>
<feature type="modified residue" description="Phosphoserine" evidence="1">
    <location>
        <position position="157"/>
    </location>
</feature>
<feature type="modified residue" description="Phosphothreonine" evidence="1">
    <location>
        <position position="406"/>
    </location>
</feature>
<feature type="modified residue" description="Phosphoserine" evidence="1">
    <location>
        <position position="446"/>
    </location>
</feature>
<feature type="modified residue" description="Phosphoserine" evidence="1">
    <location>
        <position position="462"/>
    </location>
</feature>
<feature type="modified residue" description="Phosphoserine" evidence="1">
    <location>
        <position position="464"/>
    </location>
</feature>
<feature type="modified residue" description="Phosphoserine" evidence="1">
    <location>
        <position position="470"/>
    </location>
</feature>
<feature type="modified residue" description="Phosphoserine" evidence="10">
    <location>
        <position position="472"/>
    </location>
</feature>
<feature type="modified residue" description="Phosphothreonine" evidence="1">
    <location>
        <position position="477"/>
    </location>
</feature>
<feature type="modified residue" description="Phosphoserine" evidence="1">
    <location>
        <position position="534"/>
    </location>
</feature>
<feature type="modified residue" description="Phosphoserine" evidence="1">
    <location>
        <position position="573"/>
    </location>
</feature>
<feature type="modified residue" description="Phosphoserine" evidence="1">
    <location>
        <position position="625"/>
    </location>
</feature>
<feature type="modified residue" description="Phosphothreonine" evidence="1">
    <location>
        <position position="1204"/>
    </location>
</feature>
<feature type="cross-link" description="Glycyl lysine isopeptide (Lys-Gly) (interchain with G-Cter in SUMO2)" evidence="1">
    <location>
        <position position="9"/>
    </location>
</feature>
<feature type="cross-link" description="Glycyl lysine isopeptide (Lys-Gly) (interchain with G-Cter in SUMO2)" evidence="1">
    <location>
        <position position="113"/>
    </location>
</feature>
<feature type="cross-link" description="Glycyl lysine isopeptide (Lys-Gly) (interchain with G-Cter in SUMO2)" evidence="1">
    <location>
        <position position="189"/>
    </location>
</feature>
<feature type="cross-link" description="Glycyl lysine isopeptide (Lys-Gly) (interchain with G-Cter in SUMO2)" evidence="1">
    <location>
        <position position="486"/>
    </location>
</feature>
<feature type="cross-link" description="Glycyl lysine isopeptide (Lys-Gly) (interchain with G-Cter in SUMO2)" evidence="1">
    <location>
        <position position="550"/>
    </location>
</feature>
<feature type="cross-link" description="Glycyl lysine isopeptide (Lys-Gly) (interchain with G-Cter in SUMO2)" evidence="1">
    <location>
        <position position="590"/>
    </location>
</feature>
<feature type="cross-link" description="Glycyl lysine isopeptide (Lys-Gly) (interchain with G-Cter in SUMO2)" evidence="1">
    <location>
        <position position="647"/>
    </location>
</feature>
<feature type="cross-link" description="Glycyl lysine isopeptide (Lys-Gly) (interchain with G-Cter in SUMO2)" evidence="1">
    <location>
        <position position="771"/>
    </location>
</feature>
<feature type="cross-link" description="Glycyl lysine isopeptide (Lys-Gly) (interchain with G-Cter in SUMO2)" evidence="1">
    <location>
        <position position="908"/>
    </location>
</feature>
<feature type="cross-link" description="Glycyl lysine isopeptide (Lys-Gly) (interchain with G-Cter in SUMO1); alternate" evidence="1">
    <location>
        <position position="1095"/>
    </location>
</feature>
<feature type="cross-link" description="Glycyl lysine isopeptide (Lys-Gly) (interchain with G-Cter in SUMO2); alternate" evidence="1">
    <location>
        <position position="1095"/>
    </location>
</feature>
<feature type="cross-link" description="Glycyl lysine isopeptide (Lys-Gly) (interchain with G-Cter in SUMO2)" evidence="1">
    <location>
        <position position="1115"/>
    </location>
</feature>
<feature type="cross-link" description="Glycyl lysine isopeptide (Lys-Gly) (interchain with G-Cter in SUMO2)" evidence="1">
    <location>
        <position position="1207"/>
    </location>
</feature>
<feature type="cross-link" description="Glycyl lysine isopeptide (Lys-Gly) (interchain with G-Cter in SUMO2)" evidence="1">
    <location>
        <position position="1270"/>
    </location>
</feature>
<feature type="splice variant" id="VSP_017006" description="In isoform 3." evidence="7">
    <location>
        <begin position="1"/>
        <end position="53"/>
    </location>
</feature>
<feature type="splice variant" id="VSP_017007" description="In isoform 2." evidence="6">
    <original>NIKKEQEEKQEEMRF</original>
    <variation>SASVVNLLFVCSKET</variation>
    <location>
        <begin position="1291"/>
        <end position="1305"/>
    </location>
</feature>
<feature type="splice variant" id="VSP_017008" description="In isoform 2." evidence="6">
    <location>
        <begin position="1306"/>
        <end position="1407"/>
    </location>
</feature>
<feature type="sequence conflict" description="In Ref. 2; BAC65745." evidence="8" ref="2">
    <original>L</original>
    <variation>V</variation>
    <location>
        <position position="310"/>
    </location>
</feature>
<feature type="sequence conflict" description="In Ref. 1; BAE36014." evidence="8" ref="1">
    <original>K</original>
    <variation>E</variation>
    <location>
        <position position="1162"/>
    </location>
</feature>
<feature type="sequence conflict" description="In Ref. 1; BAE36014." evidence="8" ref="1">
    <original>K</original>
    <variation>R</variation>
    <location>
        <position position="1294"/>
    </location>
</feature>
<accession>Q3TUF7</accession>
<accession>Q6PGF8</accession>
<accession>Q80TI2</accession>
<accession>Q8CG86</accession>
<reference key="1">
    <citation type="journal article" date="2005" name="Science">
        <title>The transcriptional landscape of the mammalian genome.</title>
        <authorList>
            <person name="Carninci P."/>
            <person name="Kasukawa T."/>
            <person name="Katayama S."/>
            <person name="Gough J."/>
            <person name="Frith M.C."/>
            <person name="Maeda N."/>
            <person name="Oyama R."/>
            <person name="Ravasi T."/>
            <person name="Lenhard B."/>
            <person name="Wells C."/>
            <person name="Kodzius R."/>
            <person name="Shimokawa K."/>
            <person name="Bajic V.B."/>
            <person name="Brenner S.E."/>
            <person name="Batalov S."/>
            <person name="Forrest A.R."/>
            <person name="Zavolan M."/>
            <person name="Davis M.J."/>
            <person name="Wilming L.G."/>
            <person name="Aidinis V."/>
            <person name="Allen J.E."/>
            <person name="Ambesi-Impiombato A."/>
            <person name="Apweiler R."/>
            <person name="Aturaliya R.N."/>
            <person name="Bailey T.L."/>
            <person name="Bansal M."/>
            <person name="Baxter L."/>
            <person name="Beisel K.W."/>
            <person name="Bersano T."/>
            <person name="Bono H."/>
            <person name="Chalk A.M."/>
            <person name="Chiu K.P."/>
            <person name="Choudhary V."/>
            <person name="Christoffels A."/>
            <person name="Clutterbuck D.R."/>
            <person name="Crowe M.L."/>
            <person name="Dalla E."/>
            <person name="Dalrymple B.P."/>
            <person name="de Bono B."/>
            <person name="Della Gatta G."/>
            <person name="di Bernardo D."/>
            <person name="Down T."/>
            <person name="Engstrom P."/>
            <person name="Fagiolini M."/>
            <person name="Faulkner G."/>
            <person name="Fletcher C.F."/>
            <person name="Fukushima T."/>
            <person name="Furuno M."/>
            <person name="Futaki S."/>
            <person name="Gariboldi M."/>
            <person name="Georgii-Hemming P."/>
            <person name="Gingeras T.R."/>
            <person name="Gojobori T."/>
            <person name="Green R.E."/>
            <person name="Gustincich S."/>
            <person name="Harbers M."/>
            <person name="Hayashi Y."/>
            <person name="Hensch T.K."/>
            <person name="Hirokawa N."/>
            <person name="Hill D."/>
            <person name="Huminiecki L."/>
            <person name="Iacono M."/>
            <person name="Ikeo K."/>
            <person name="Iwama A."/>
            <person name="Ishikawa T."/>
            <person name="Jakt M."/>
            <person name="Kanapin A."/>
            <person name="Katoh M."/>
            <person name="Kawasawa Y."/>
            <person name="Kelso J."/>
            <person name="Kitamura H."/>
            <person name="Kitano H."/>
            <person name="Kollias G."/>
            <person name="Krishnan S.P."/>
            <person name="Kruger A."/>
            <person name="Kummerfeld S.K."/>
            <person name="Kurochkin I.V."/>
            <person name="Lareau L.F."/>
            <person name="Lazarevic D."/>
            <person name="Lipovich L."/>
            <person name="Liu J."/>
            <person name="Liuni S."/>
            <person name="McWilliam S."/>
            <person name="Madan Babu M."/>
            <person name="Madera M."/>
            <person name="Marchionni L."/>
            <person name="Matsuda H."/>
            <person name="Matsuzawa S."/>
            <person name="Miki H."/>
            <person name="Mignone F."/>
            <person name="Miyake S."/>
            <person name="Morris K."/>
            <person name="Mottagui-Tabar S."/>
            <person name="Mulder N."/>
            <person name="Nakano N."/>
            <person name="Nakauchi H."/>
            <person name="Ng P."/>
            <person name="Nilsson R."/>
            <person name="Nishiguchi S."/>
            <person name="Nishikawa S."/>
            <person name="Nori F."/>
            <person name="Ohara O."/>
            <person name="Okazaki Y."/>
            <person name="Orlando V."/>
            <person name="Pang K.C."/>
            <person name="Pavan W.J."/>
            <person name="Pavesi G."/>
            <person name="Pesole G."/>
            <person name="Petrovsky N."/>
            <person name="Piazza S."/>
            <person name="Reed J."/>
            <person name="Reid J.F."/>
            <person name="Ring B.Z."/>
            <person name="Ringwald M."/>
            <person name="Rost B."/>
            <person name="Ruan Y."/>
            <person name="Salzberg S.L."/>
            <person name="Sandelin A."/>
            <person name="Schneider C."/>
            <person name="Schoenbach C."/>
            <person name="Sekiguchi K."/>
            <person name="Semple C.A."/>
            <person name="Seno S."/>
            <person name="Sessa L."/>
            <person name="Sheng Y."/>
            <person name="Shibata Y."/>
            <person name="Shimada H."/>
            <person name="Shimada K."/>
            <person name="Silva D."/>
            <person name="Sinclair B."/>
            <person name="Sperling S."/>
            <person name="Stupka E."/>
            <person name="Sugiura K."/>
            <person name="Sultana R."/>
            <person name="Takenaka Y."/>
            <person name="Taki K."/>
            <person name="Tammoja K."/>
            <person name="Tan S.L."/>
            <person name="Tang S."/>
            <person name="Taylor M.S."/>
            <person name="Tegner J."/>
            <person name="Teichmann S.A."/>
            <person name="Ueda H.R."/>
            <person name="van Nimwegen E."/>
            <person name="Verardo R."/>
            <person name="Wei C.L."/>
            <person name="Yagi K."/>
            <person name="Yamanishi H."/>
            <person name="Zabarovsky E."/>
            <person name="Zhu S."/>
            <person name="Zimmer A."/>
            <person name="Hide W."/>
            <person name="Bult C."/>
            <person name="Grimmond S.M."/>
            <person name="Teasdale R.D."/>
            <person name="Liu E.T."/>
            <person name="Brusic V."/>
            <person name="Quackenbush J."/>
            <person name="Wahlestedt C."/>
            <person name="Mattick J.S."/>
            <person name="Hume D.A."/>
            <person name="Kai C."/>
            <person name="Sasaki D."/>
            <person name="Tomaru Y."/>
            <person name="Fukuda S."/>
            <person name="Kanamori-Katayama M."/>
            <person name="Suzuki M."/>
            <person name="Aoki J."/>
            <person name="Arakawa T."/>
            <person name="Iida J."/>
            <person name="Imamura K."/>
            <person name="Itoh M."/>
            <person name="Kato T."/>
            <person name="Kawaji H."/>
            <person name="Kawagashira N."/>
            <person name="Kawashima T."/>
            <person name="Kojima M."/>
            <person name="Kondo S."/>
            <person name="Konno H."/>
            <person name="Nakano K."/>
            <person name="Ninomiya N."/>
            <person name="Nishio T."/>
            <person name="Okada M."/>
            <person name="Plessy C."/>
            <person name="Shibata K."/>
            <person name="Shiraki T."/>
            <person name="Suzuki S."/>
            <person name="Tagami M."/>
            <person name="Waki K."/>
            <person name="Watahiki A."/>
            <person name="Okamura-Oho Y."/>
            <person name="Suzuki H."/>
            <person name="Kawai J."/>
            <person name="Hayashizaki Y."/>
        </authorList>
    </citation>
    <scope>NUCLEOTIDE SEQUENCE [LARGE SCALE MRNA] (ISOFORM 3)</scope>
    <source>
        <strain>C57BL/6J</strain>
        <tissue>Head</tissue>
    </source>
</reference>
<reference key="2">
    <citation type="journal article" date="2003" name="DNA Res.">
        <title>Prediction of the coding sequences of mouse homologues of KIAA gene: II. The complete nucleotide sequences of 400 mouse KIAA-homologous cDNAs identified by screening of terminal sequences of cDNA clones randomly sampled from size-fractionated libraries.</title>
        <authorList>
            <person name="Okazaki N."/>
            <person name="Kikuno R."/>
            <person name="Ohara R."/>
            <person name="Inamoto S."/>
            <person name="Aizawa H."/>
            <person name="Yuasa S."/>
            <person name="Nakajima D."/>
            <person name="Nagase T."/>
            <person name="Ohara O."/>
            <person name="Koga H."/>
        </authorList>
    </citation>
    <scope>NUCLEOTIDE SEQUENCE [LARGE SCALE MRNA] OF 1-497</scope>
    <source>
        <tissue>Brain</tissue>
    </source>
</reference>
<reference key="3">
    <citation type="submission" date="2003-12" db="EMBL/GenBank/DDBJ databases">
        <authorList>
            <person name="Okazaki N."/>
            <person name="Kikuno R."/>
            <person name="Nagase T."/>
            <person name="Ohara O."/>
            <person name="Koga H."/>
        </authorList>
    </citation>
    <scope>SEQUENCE REVISION</scope>
</reference>
<reference key="4">
    <citation type="journal article" date="2004" name="Genome Res.">
        <title>The status, quality, and expansion of the NIH full-length cDNA project: the Mammalian Gene Collection (MGC).</title>
        <authorList>
            <consortium name="The MGC Project Team"/>
        </authorList>
    </citation>
    <scope>NUCLEOTIDE SEQUENCE [LARGE SCALE MRNA] OF 38-1407 (ISOFORM 2)</scope>
    <scope>NUCLEOTIDE SEQUENCE [LARGE SCALE MRNA] OF 991-1407 (ISOFORM 1)</scope>
    <source>
        <strain>C57BL/6J</strain>
        <tissue>Brain</tissue>
        <tissue>Mammary gland</tissue>
    </source>
</reference>
<reference key="5">
    <citation type="journal article" date="2010" name="Cell">
        <title>A tissue-specific atlas of mouse protein phosphorylation and expression.</title>
        <authorList>
            <person name="Huttlin E.L."/>
            <person name="Jedrychowski M.P."/>
            <person name="Elias J.E."/>
            <person name="Goswami T."/>
            <person name="Rad R."/>
            <person name="Beausoleil S.A."/>
            <person name="Villen J."/>
            <person name="Haas W."/>
            <person name="Sowa M.E."/>
            <person name="Gygi S.P."/>
        </authorList>
    </citation>
    <scope>PHOSPHORYLATION [LARGE SCALE ANALYSIS] AT SER-120 AND SER-472</scope>
    <scope>IDENTIFICATION BY MASS SPECTROMETRY [LARGE SCALE ANALYSIS]</scope>
    <source>
        <tissue>Lung</tissue>
        <tissue>Spleen</tissue>
        <tissue>Testis</tissue>
    </source>
</reference>
<comment type="function">
    <text evidence="1">Chromatin reader component of the ATAC complex, a complex with histone acetyltransferase activity on histones H3 and H4. YEATS2 specifically recognizes and binds histone H3 crotonylated at 'Lys-27' (H3K27cr). Crotonylation marks active promoters and enhancers and confers resistance to transcriptional repressors.</text>
</comment>
<comment type="subunit">
    <text evidence="1">Component of the ADA2A-containing complex (ATAC), composed of KAT14, KAT2A, TADA2L, TADA3L, ZZ3, MBIP, WDR5, YEATS2, SGF29 and DR1.</text>
</comment>
<comment type="subcellular location">
    <subcellularLocation>
        <location evidence="1">Nucleus</location>
    </subcellularLocation>
</comment>
<comment type="alternative products">
    <event type="alternative splicing"/>
    <isoform>
        <id>Q3TUF7-1</id>
        <name>1</name>
        <sequence type="displayed"/>
    </isoform>
    <isoform>
        <id>Q3TUF7-2</id>
        <name>2</name>
        <sequence type="described" ref="VSP_017007 VSP_017008"/>
    </isoform>
    <isoform>
        <id>Q3TUF7-3</id>
        <name>3</name>
        <sequence type="described" ref="VSP_017006"/>
    </isoform>
</comment>
<comment type="domain">
    <text evidence="1">The YEATS domain specifically recognizes and binds crotonylated histones.</text>
</comment>
<comment type="sequence caution" evidence="8">
    <conflict type="erroneous initiation">
        <sequence resource="EMBL-CDS" id="AAH57045"/>
    </conflict>
</comment>
<comment type="sequence caution" evidence="8">
    <conflict type="miscellaneous discrepancy">
        <sequence resource="EMBL-CDS" id="BAC65745"/>
    </conflict>
    <text>The sequence differs from that shown because it is derived from pre-RNA.</text>
</comment>
<organism>
    <name type="scientific">Mus musculus</name>
    <name type="common">Mouse</name>
    <dbReference type="NCBI Taxonomy" id="10090"/>
    <lineage>
        <taxon>Eukaryota</taxon>
        <taxon>Metazoa</taxon>
        <taxon>Chordata</taxon>
        <taxon>Craniata</taxon>
        <taxon>Vertebrata</taxon>
        <taxon>Euteleostomi</taxon>
        <taxon>Mammalia</taxon>
        <taxon>Eutheria</taxon>
        <taxon>Euarchontoglires</taxon>
        <taxon>Glires</taxon>
        <taxon>Rodentia</taxon>
        <taxon>Myomorpha</taxon>
        <taxon>Muroidea</taxon>
        <taxon>Muridae</taxon>
        <taxon>Murinae</taxon>
        <taxon>Mus</taxon>
        <taxon>Mus</taxon>
    </lineage>
</organism>
<evidence type="ECO:0000250" key="1">
    <source>
        <dbReference type="UniProtKB" id="Q9ULM3"/>
    </source>
</evidence>
<evidence type="ECO:0000255" key="2"/>
<evidence type="ECO:0000255" key="3">
    <source>
        <dbReference type="PROSITE-ProRule" id="PRU00376"/>
    </source>
</evidence>
<evidence type="ECO:0000256" key="4">
    <source>
        <dbReference type="SAM" id="MobiDB-lite"/>
    </source>
</evidence>
<evidence type="ECO:0000303" key="5">
    <source>
    </source>
</evidence>
<evidence type="ECO:0000303" key="6">
    <source>
    </source>
</evidence>
<evidence type="ECO:0000303" key="7">
    <source>
    </source>
</evidence>
<evidence type="ECO:0000305" key="8"/>
<evidence type="ECO:0000312" key="9">
    <source>
        <dbReference type="MGI" id="MGI:2447762"/>
    </source>
</evidence>
<evidence type="ECO:0007744" key="10">
    <source>
    </source>
</evidence>
<keyword id="KW-0025">Alternative splicing</keyword>
<keyword id="KW-0175">Coiled coil</keyword>
<keyword id="KW-1017">Isopeptide bond</keyword>
<keyword id="KW-0539">Nucleus</keyword>
<keyword id="KW-0597">Phosphoprotein</keyword>
<keyword id="KW-1185">Reference proteome</keyword>
<keyword id="KW-0832">Ubl conjugation</keyword>